<protein>
    <recommendedName>
        <fullName evidence="2">Elongation factor Tu</fullName>
        <shortName evidence="2">EF-Tu</shortName>
        <ecNumber evidence="2">3.6.5.3</ecNumber>
    </recommendedName>
</protein>
<proteinExistence type="inferred from homology"/>
<dbReference type="EC" id="3.6.5.3" evidence="2"/>
<dbReference type="EMBL" id="AF502186">
    <property type="protein sequence ID" value="AAM90944.1"/>
    <property type="molecule type" value="Genomic_DNA"/>
</dbReference>
<dbReference type="EMBL" id="AE017197">
    <property type="protein sequence ID" value="AAU04116.1"/>
    <property type="molecule type" value="Genomic_DNA"/>
</dbReference>
<dbReference type="RefSeq" id="WP_011191093.1">
    <property type="nucleotide sequence ID" value="NC_006142.1"/>
</dbReference>
<dbReference type="SMR" id="Q8KT95"/>
<dbReference type="KEGG" id="rty:RT0653"/>
<dbReference type="eggNOG" id="COG0050">
    <property type="taxonomic scope" value="Bacteria"/>
</dbReference>
<dbReference type="HOGENOM" id="CLU_007265_0_0_5"/>
<dbReference type="OrthoDB" id="9803139at2"/>
<dbReference type="Proteomes" id="UP000000604">
    <property type="component" value="Chromosome"/>
</dbReference>
<dbReference type="GO" id="GO:0005737">
    <property type="term" value="C:cytoplasm"/>
    <property type="evidence" value="ECO:0007669"/>
    <property type="project" value="UniProtKB-SubCell"/>
</dbReference>
<dbReference type="GO" id="GO:0005525">
    <property type="term" value="F:GTP binding"/>
    <property type="evidence" value="ECO:0007669"/>
    <property type="project" value="UniProtKB-UniRule"/>
</dbReference>
<dbReference type="GO" id="GO:0003924">
    <property type="term" value="F:GTPase activity"/>
    <property type="evidence" value="ECO:0007669"/>
    <property type="project" value="InterPro"/>
</dbReference>
<dbReference type="GO" id="GO:0097216">
    <property type="term" value="F:guanosine tetraphosphate binding"/>
    <property type="evidence" value="ECO:0007669"/>
    <property type="project" value="UniProtKB-ARBA"/>
</dbReference>
<dbReference type="GO" id="GO:0003746">
    <property type="term" value="F:translation elongation factor activity"/>
    <property type="evidence" value="ECO:0007669"/>
    <property type="project" value="UniProtKB-UniRule"/>
</dbReference>
<dbReference type="CDD" id="cd01884">
    <property type="entry name" value="EF_Tu"/>
    <property type="match status" value="1"/>
</dbReference>
<dbReference type="CDD" id="cd03697">
    <property type="entry name" value="EFTU_II"/>
    <property type="match status" value="1"/>
</dbReference>
<dbReference type="CDD" id="cd03707">
    <property type="entry name" value="EFTU_III"/>
    <property type="match status" value="1"/>
</dbReference>
<dbReference type="FunFam" id="2.40.30.10:FF:000001">
    <property type="entry name" value="Elongation factor Tu"/>
    <property type="match status" value="1"/>
</dbReference>
<dbReference type="FunFam" id="3.40.50.300:FF:000003">
    <property type="entry name" value="Elongation factor Tu"/>
    <property type="match status" value="1"/>
</dbReference>
<dbReference type="Gene3D" id="3.40.50.300">
    <property type="entry name" value="P-loop containing nucleotide triphosphate hydrolases"/>
    <property type="match status" value="1"/>
</dbReference>
<dbReference type="Gene3D" id="2.40.30.10">
    <property type="entry name" value="Translation factors"/>
    <property type="match status" value="2"/>
</dbReference>
<dbReference type="HAMAP" id="MF_00118_B">
    <property type="entry name" value="EF_Tu_B"/>
    <property type="match status" value="1"/>
</dbReference>
<dbReference type="InterPro" id="IPR041709">
    <property type="entry name" value="EF-Tu_GTP-bd"/>
</dbReference>
<dbReference type="InterPro" id="IPR050055">
    <property type="entry name" value="EF-Tu_GTPase"/>
</dbReference>
<dbReference type="InterPro" id="IPR004161">
    <property type="entry name" value="EFTu-like_2"/>
</dbReference>
<dbReference type="InterPro" id="IPR033720">
    <property type="entry name" value="EFTU_2"/>
</dbReference>
<dbReference type="InterPro" id="IPR031157">
    <property type="entry name" value="G_TR_CS"/>
</dbReference>
<dbReference type="InterPro" id="IPR027417">
    <property type="entry name" value="P-loop_NTPase"/>
</dbReference>
<dbReference type="InterPro" id="IPR005225">
    <property type="entry name" value="Small_GTP-bd"/>
</dbReference>
<dbReference type="InterPro" id="IPR000795">
    <property type="entry name" value="T_Tr_GTP-bd_dom"/>
</dbReference>
<dbReference type="InterPro" id="IPR009000">
    <property type="entry name" value="Transl_B-barrel_sf"/>
</dbReference>
<dbReference type="InterPro" id="IPR009001">
    <property type="entry name" value="Transl_elong_EF1A/Init_IF2_C"/>
</dbReference>
<dbReference type="InterPro" id="IPR004541">
    <property type="entry name" value="Transl_elong_EFTu/EF1A_bac/org"/>
</dbReference>
<dbReference type="InterPro" id="IPR004160">
    <property type="entry name" value="Transl_elong_EFTu/EF1A_C"/>
</dbReference>
<dbReference type="NCBIfam" id="TIGR00485">
    <property type="entry name" value="EF-Tu"/>
    <property type="match status" value="1"/>
</dbReference>
<dbReference type="NCBIfam" id="NF000766">
    <property type="entry name" value="PRK00049.1"/>
    <property type="match status" value="1"/>
</dbReference>
<dbReference type="NCBIfam" id="NF009372">
    <property type="entry name" value="PRK12735.1"/>
    <property type="match status" value="1"/>
</dbReference>
<dbReference type="NCBIfam" id="NF009373">
    <property type="entry name" value="PRK12736.1"/>
    <property type="match status" value="1"/>
</dbReference>
<dbReference type="NCBIfam" id="TIGR00231">
    <property type="entry name" value="small_GTP"/>
    <property type="match status" value="1"/>
</dbReference>
<dbReference type="PANTHER" id="PTHR43721:SF22">
    <property type="entry name" value="ELONGATION FACTOR TU, MITOCHONDRIAL"/>
    <property type="match status" value="1"/>
</dbReference>
<dbReference type="PANTHER" id="PTHR43721">
    <property type="entry name" value="ELONGATION FACTOR TU-RELATED"/>
    <property type="match status" value="1"/>
</dbReference>
<dbReference type="Pfam" id="PF00009">
    <property type="entry name" value="GTP_EFTU"/>
    <property type="match status" value="1"/>
</dbReference>
<dbReference type="Pfam" id="PF03144">
    <property type="entry name" value="GTP_EFTU_D2"/>
    <property type="match status" value="1"/>
</dbReference>
<dbReference type="Pfam" id="PF03143">
    <property type="entry name" value="GTP_EFTU_D3"/>
    <property type="match status" value="1"/>
</dbReference>
<dbReference type="PRINTS" id="PR00315">
    <property type="entry name" value="ELONGATNFCT"/>
</dbReference>
<dbReference type="SUPFAM" id="SSF50465">
    <property type="entry name" value="EF-Tu/eEF-1alpha/eIF2-gamma C-terminal domain"/>
    <property type="match status" value="1"/>
</dbReference>
<dbReference type="SUPFAM" id="SSF52540">
    <property type="entry name" value="P-loop containing nucleoside triphosphate hydrolases"/>
    <property type="match status" value="1"/>
</dbReference>
<dbReference type="SUPFAM" id="SSF50447">
    <property type="entry name" value="Translation proteins"/>
    <property type="match status" value="1"/>
</dbReference>
<dbReference type="PROSITE" id="PS00301">
    <property type="entry name" value="G_TR_1"/>
    <property type="match status" value="1"/>
</dbReference>
<dbReference type="PROSITE" id="PS51722">
    <property type="entry name" value="G_TR_2"/>
    <property type="match status" value="1"/>
</dbReference>
<name>EFTU_RICTY</name>
<organism>
    <name type="scientific">Rickettsia typhi (strain ATCC VR-144 / Wilmington)</name>
    <dbReference type="NCBI Taxonomy" id="257363"/>
    <lineage>
        <taxon>Bacteria</taxon>
        <taxon>Pseudomonadati</taxon>
        <taxon>Pseudomonadota</taxon>
        <taxon>Alphaproteobacteria</taxon>
        <taxon>Rickettsiales</taxon>
        <taxon>Rickettsiaceae</taxon>
        <taxon>Rickettsieae</taxon>
        <taxon>Rickettsia</taxon>
        <taxon>typhus group</taxon>
    </lineage>
</organism>
<comment type="function">
    <text evidence="2">GTP hydrolase that promotes the GTP-dependent binding of aminoacyl-tRNA to the A-site of ribosomes during protein biosynthesis.</text>
</comment>
<comment type="catalytic activity">
    <reaction evidence="2">
        <text>GTP + H2O = GDP + phosphate + H(+)</text>
        <dbReference type="Rhea" id="RHEA:19669"/>
        <dbReference type="ChEBI" id="CHEBI:15377"/>
        <dbReference type="ChEBI" id="CHEBI:15378"/>
        <dbReference type="ChEBI" id="CHEBI:37565"/>
        <dbReference type="ChEBI" id="CHEBI:43474"/>
        <dbReference type="ChEBI" id="CHEBI:58189"/>
        <dbReference type="EC" id="3.6.5.3"/>
    </reaction>
    <physiologicalReaction direction="left-to-right" evidence="2">
        <dbReference type="Rhea" id="RHEA:19670"/>
    </physiologicalReaction>
</comment>
<comment type="subunit">
    <text evidence="2">Monomer.</text>
</comment>
<comment type="subcellular location">
    <subcellularLocation>
        <location evidence="2">Cytoplasm</location>
    </subcellularLocation>
</comment>
<comment type="similarity">
    <text evidence="2">Belongs to the TRAFAC class translation factor GTPase superfamily. Classic translation factor GTPase family. EF-Tu/EF-1A subfamily.</text>
</comment>
<accession>Q8KT95</accession>
<accession>Q68W76</accession>
<gene>
    <name evidence="2" type="primary">tuf</name>
    <name type="ordered locus">RT0653</name>
</gene>
<sequence>MAKAKFERTKPHVNIGTIGHVDHGKTSLTAAITIILAKTGGAKATAYDQIDAAPEEKERGITISTAHVEYETNNRHYAHVDCPGHADYVKNMITGAAQMDGAILVVSAADGPMPQTREHILLAKQVGVPAMVVFLNKVDMVDDPDLLELVEMEVRELLSKYGFPGNEIPIIKGSALQALEGKPEGEKAINELMNAVDSYIPQPIRATDKPFLMPIEDVFSISGRGTVVTGRVESGIIKVGEEIEIVGLKNTQKTTCTGVEMFRKLLDEGQSGDNVGILLRGTKREEVERGQVLAKPGSIKPHDKFEAEVYVLSKEEGGRHTPFTNDYRPQFYFRTTDVTGTIKLPFDKQMVMPGDNATFSVELIKPIAMQEGLKFSIREGGRTVGAGVVTRINN</sequence>
<feature type="chain" id="PRO_0000091382" description="Elongation factor Tu">
    <location>
        <begin position="1"/>
        <end position="394"/>
    </location>
</feature>
<feature type="domain" description="tr-type G">
    <location>
        <begin position="10"/>
        <end position="204"/>
    </location>
</feature>
<feature type="region of interest" description="G1" evidence="1">
    <location>
        <begin position="19"/>
        <end position="26"/>
    </location>
</feature>
<feature type="region of interest" description="G2" evidence="1">
    <location>
        <begin position="60"/>
        <end position="64"/>
    </location>
</feature>
<feature type="region of interest" description="G3" evidence="1">
    <location>
        <begin position="81"/>
        <end position="84"/>
    </location>
</feature>
<feature type="region of interest" description="G4" evidence="1">
    <location>
        <begin position="136"/>
        <end position="139"/>
    </location>
</feature>
<feature type="region of interest" description="G5" evidence="1">
    <location>
        <begin position="174"/>
        <end position="176"/>
    </location>
</feature>
<feature type="binding site" evidence="2">
    <location>
        <begin position="19"/>
        <end position="26"/>
    </location>
    <ligand>
        <name>GTP</name>
        <dbReference type="ChEBI" id="CHEBI:37565"/>
    </ligand>
</feature>
<feature type="binding site" evidence="2">
    <location>
        <position position="26"/>
    </location>
    <ligand>
        <name>Mg(2+)</name>
        <dbReference type="ChEBI" id="CHEBI:18420"/>
    </ligand>
</feature>
<feature type="binding site" evidence="2">
    <location>
        <begin position="81"/>
        <end position="85"/>
    </location>
    <ligand>
        <name>GTP</name>
        <dbReference type="ChEBI" id="CHEBI:37565"/>
    </ligand>
</feature>
<feature type="binding site" evidence="2">
    <location>
        <begin position="136"/>
        <end position="139"/>
    </location>
    <ligand>
        <name>GTP</name>
        <dbReference type="ChEBI" id="CHEBI:37565"/>
    </ligand>
</feature>
<feature type="sequence conflict" description="In Ref. 1; AAM90944." evidence="3" ref="1">
    <original>G</original>
    <variation>S</variation>
    <location>
        <position position="225"/>
    </location>
</feature>
<feature type="sequence conflict" description="In Ref. 1; AAM90944." evidence="3" ref="1">
    <original>G</original>
    <variation>R</variation>
    <location>
        <position position="269"/>
    </location>
</feature>
<keyword id="KW-0963">Cytoplasm</keyword>
<keyword id="KW-0251">Elongation factor</keyword>
<keyword id="KW-0342">GTP-binding</keyword>
<keyword id="KW-0378">Hydrolase</keyword>
<keyword id="KW-0460">Magnesium</keyword>
<keyword id="KW-0479">Metal-binding</keyword>
<keyword id="KW-0547">Nucleotide-binding</keyword>
<keyword id="KW-0648">Protein biosynthesis</keyword>
<evidence type="ECO:0000250" key="1"/>
<evidence type="ECO:0000255" key="2">
    <source>
        <dbReference type="HAMAP-Rule" id="MF_00118"/>
    </source>
</evidence>
<evidence type="ECO:0000305" key="3"/>
<reference key="1">
    <citation type="journal article" date="2002" name="Mol. Biol. Evol.">
        <title>Proliferation and deterioration of Rickettsia palindromic elements.</title>
        <authorList>
            <person name="Amiri H."/>
            <person name="Alsmark C.M."/>
            <person name="Andersson S.G.E."/>
        </authorList>
    </citation>
    <scope>NUCLEOTIDE SEQUENCE [GENOMIC DNA]</scope>
</reference>
<reference key="2">
    <citation type="journal article" date="2004" name="J. Bacteriol.">
        <title>Complete genome sequence of Rickettsia typhi and comparison with sequences of other Rickettsiae.</title>
        <authorList>
            <person name="McLeod M.P."/>
            <person name="Qin X."/>
            <person name="Karpathy S.E."/>
            <person name="Gioia J."/>
            <person name="Highlander S.K."/>
            <person name="Fox G.E."/>
            <person name="McNeill T.Z."/>
            <person name="Jiang H."/>
            <person name="Muzny D."/>
            <person name="Jacob L.S."/>
            <person name="Hawes A.C."/>
            <person name="Sodergren E."/>
            <person name="Gill R."/>
            <person name="Hume J."/>
            <person name="Morgan M."/>
            <person name="Fan G."/>
            <person name="Amin A.G."/>
            <person name="Gibbs R.A."/>
            <person name="Hong C."/>
            <person name="Yu X.-J."/>
            <person name="Walker D.H."/>
            <person name="Weinstock G.M."/>
        </authorList>
    </citation>
    <scope>NUCLEOTIDE SEQUENCE [LARGE SCALE GENOMIC DNA]</scope>
    <source>
        <strain>ATCC VR-144 / Wilmington</strain>
    </source>
</reference>